<protein>
    <recommendedName>
        <fullName>Thermonuclease</fullName>
        <shortName>TNase</shortName>
        <ecNumber>3.1.31.1</ecNumber>
    </recommendedName>
    <alternativeName>
        <fullName>Micrococcal nuclease</fullName>
    </alternativeName>
    <alternativeName>
        <fullName evidence="9">Staphylococcal nuclease</fullName>
    </alternativeName>
    <component>
        <recommendedName>
            <fullName evidence="11">Nuclease B</fullName>
        </recommendedName>
    </component>
    <component>
        <recommendedName>
            <fullName evidence="11">Nuclease A</fullName>
        </recommendedName>
    </component>
</protein>
<keyword id="KW-0002">3D-structure</keyword>
<keyword id="KW-0106">Calcium</keyword>
<keyword id="KW-0903">Direct protein sequencing</keyword>
<keyword id="KW-0255">Endonuclease</keyword>
<keyword id="KW-0378">Hydrolase</keyword>
<keyword id="KW-0472">Membrane</keyword>
<keyword id="KW-0479">Metal-binding</keyword>
<keyword id="KW-0540">Nuclease</keyword>
<keyword id="KW-0964">Secreted</keyword>
<keyword id="KW-0732">Signal</keyword>
<keyword id="KW-0865">Zymogen</keyword>
<evidence type="ECO:0000255" key="1"/>
<evidence type="ECO:0000255" key="2">
    <source>
        <dbReference type="PROSITE-ProRule" id="PRU00272"/>
    </source>
</evidence>
<evidence type="ECO:0000255" key="3">
    <source>
        <dbReference type="PROSITE-ProRule" id="PRU10048"/>
    </source>
</evidence>
<evidence type="ECO:0000255" key="4">
    <source>
        <dbReference type="PROSITE-ProRule" id="PRU10049"/>
    </source>
</evidence>
<evidence type="ECO:0000256" key="5">
    <source>
        <dbReference type="SAM" id="MobiDB-lite"/>
    </source>
</evidence>
<evidence type="ECO:0000269" key="6">
    <source>
    </source>
</evidence>
<evidence type="ECO:0000269" key="7">
    <source>
    </source>
</evidence>
<evidence type="ECO:0000269" key="8">
    <source>
    </source>
</evidence>
<evidence type="ECO:0000303" key="9">
    <source>
    </source>
</evidence>
<evidence type="ECO:0000303" key="10">
    <source>
    </source>
</evidence>
<evidence type="ECO:0000303" key="11">
    <source>
    </source>
</evidence>
<evidence type="ECO:0000305" key="12"/>
<evidence type="ECO:0000305" key="13">
    <source>
    </source>
</evidence>
<evidence type="ECO:0007829" key="14">
    <source>
        <dbReference type="PDB" id="1ENA"/>
    </source>
</evidence>
<evidence type="ECO:0007829" key="15">
    <source>
        <dbReference type="PDB" id="1JOK"/>
    </source>
</evidence>
<evidence type="ECO:0007829" key="16">
    <source>
        <dbReference type="PDB" id="1NSN"/>
    </source>
</evidence>
<evidence type="ECO:0007829" key="17">
    <source>
        <dbReference type="PDB" id="2SNS"/>
    </source>
</evidence>
<evidence type="ECO:0007829" key="18">
    <source>
        <dbReference type="PDB" id="2SOB"/>
    </source>
</evidence>
<evidence type="ECO:0007829" key="19">
    <source>
        <dbReference type="PDB" id="4EQP"/>
    </source>
</evidence>
<evidence type="ECO:0007829" key="20">
    <source>
        <dbReference type="PDB" id="4H7B"/>
    </source>
</evidence>
<reference key="1">
    <citation type="journal article" date="1983" name="Gene">
        <title>A genetic system for analysis of staphylococcal nuclease.</title>
        <authorList>
            <person name="Shortle D."/>
        </authorList>
    </citation>
    <scope>NUCLEOTIDE SEQUENCE [GENOMIC DNA]</scope>
    <source>
        <strain>ATCC 27735 / Foggie</strain>
    </source>
</reference>
<reference key="2">
    <citation type="journal article" date="1985" name="J. Bacteriol.">
        <title>Secretion of staphylococcal nuclease by Bacillus subtilis.</title>
        <authorList>
            <person name="Kovacevic S."/>
            <person name="Veal L.E."/>
            <person name="Hsiung H.M."/>
            <person name="Miller J.R."/>
        </authorList>
    </citation>
    <scope>NUCLEOTIDE SEQUENCE [GENOMIC DNA] OF 1-112</scope>
</reference>
<reference key="3">
    <citation type="journal article" date="1987" name="J. Bacteriol.">
        <title>Secretion and processing of staphylococcal nuclease by Bacillus subtilis.</title>
        <authorList>
            <person name="Miller J.R."/>
            <person name="Kovacevic S."/>
            <person name="Veal L.E."/>
        </authorList>
    </citation>
    <scope>NUCLEOTIDE SEQUENCE [GENOMIC DNA] OF 30-63</scope>
</reference>
<reference key="4">
    <citation type="journal article" date="1977" name="J. Biol. Chem.">
        <title>Nuclease B. A possible precursor of nuclease A, an extracellular nuclease of Staphylococcus aureus.</title>
        <authorList>
            <person name="Davis A."/>
            <person name="Moore I.B."/>
            <person name="Parker D.S."/>
            <person name="Taniuchi H."/>
        </authorList>
    </citation>
    <scope>PROTEIN SEQUENCE OF 64-82</scope>
    <scope>SUBCELLULAR LOCATION</scope>
    <source>
        <strain>ATCC 27735 / Foggie</strain>
    </source>
</reference>
<reference key="5">
    <citation type="journal article" date="1971" name="J. Biol. Chem.">
        <title>Staphylococcal nuclease (Foggi strain). II. The amino acid sequence.</title>
        <authorList>
            <person name="Cone J.L."/>
            <person name="Cusumano C.L."/>
            <person name="Taniuchi H."/>
            <person name="Anfinsen C.B."/>
        </authorList>
    </citation>
    <scope>PROTEIN SEQUENCE OF 83-231</scope>
    <scope>SUBCELLULAR LOCATION</scope>
    <source>
        <strain>ATCC 27735 / Foggie</strain>
    </source>
</reference>
<reference key="6">
    <citation type="journal article" date="1972" name="J. Biol. Chem.">
        <title>The examination of the presence of amide groups in glutamic acid and aspartic acid residues of staphylococcal nuclease (Foggi strain).</title>
        <authorList>
            <person name="Bohnert J.L."/>
            <person name="Taniuchi H."/>
        </authorList>
    </citation>
    <scope>AMIDE ASSIGNMENTS FOR 83-231</scope>
    <source>
        <strain>ATCC 27735 / Foggie</strain>
    </source>
</reference>
<reference key="7">
    <citation type="journal article" date="1979" name="Proc. Natl. Acad. Sci. U.S.A.">
        <title>Staphylococcal nuclease: proposed mechanism of action based on structure of enzyme-thymidine 3',5'-bisphosphate-calcium ion complex at 1.5-A resolution.</title>
        <authorList>
            <person name="Cotton F.A."/>
            <person name="Hazen E.C. Jr."/>
            <person name="Legg M.J."/>
        </authorList>
    </citation>
    <scope>X-RAY CRYSTALLOGRAPHY (1.5 ANGSTROMS)</scope>
    <scope>ACTIVE SITE</scope>
    <scope>PROPOSED CATALYTIC MECHANISM</scope>
</reference>
<reference key="8">
    <citation type="journal article" date="1991" name="Proteins">
        <title>The crystal structure of staphylococcal nuclease refined at 1.7-A resolution.</title>
        <authorList>
            <person name="Hynes T.R."/>
            <person name="Fox R.O."/>
        </authorList>
    </citation>
    <scope>X-RAY CRYSTALLOGRAPHY (1.7 ANGSTROMS)</scope>
</reference>
<reference key="9">
    <citation type="journal article" date="1992" name="Biochemistry">
        <title>Solution studies of staphylococcal nuclease H124L. 1. Backbone 1H and 15N resonances and secondary structure of the unligated enzyme as identified by three-dimensional NMR spectroscopy.</title>
        <authorList>
            <person name="Wang J."/>
            <person name="Mooberry E.S."/>
            <person name="Walkenhorst W.F."/>
            <person name="Markley J.L."/>
        </authorList>
    </citation>
    <scope>STRUCTURE BY NMR</scope>
</reference>
<reference key="10">
    <citation type="journal article" date="1993" name="Structure">
        <title>NMR analysis of the residual structure in the denatured state of an unusual mutant of staphylococcal nuclease.</title>
        <authorList>
            <person name="Shortle D."/>
            <person name="Abeygunawardana C."/>
        </authorList>
    </citation>
    <scope>STRUCTURE BY NMR OF 83-218</scope>
</reference>
<proteinExistence type="evidence at protein level"/>
<comment type="function">
    <text>Enzyme that catalyzes the hydrolysis of both DNA and RNA at the 5' position of the phosphodiester bond.</text>
</comment>
<comment type="catalytic activity">
    <reaction evidence="3 4">
        <text>Endonucleolytic cleavage to nucleoside 3'-phosphates and 3'-phosphooligonucleotide end-products.</text>
        <dbReference type="EC" id="3.1.31.1"/>
    </reaction>
</comment>
<comment type="cofactor">
    <cofactor>
        <name>Ca(2+)</name>
        <dbReference type="ChEBI" id="CHEBI:29108"/>
    </cofactor>
    <text>Binds 1 Ca(2+) ion per subunit.</text>
</comment>
<comment type="subcellular location">
    <molecule>Nuclease A</molecule>
    <subcellularLocation>
        <location evidence="8 13">Secreted</location>
    </subcellularLocation>
</comment>
<comment type="subcellular location">
    <molecule>Nuclease B</molecule>
    <subcellularLocation>
        <location>Membrane</location>
    </subcellularLocation>
</comment>
<comment type="similarity">
    <text evidence="2">Belongs to the thermonuclease family.</text>
</comment>
<name>NUC_STAAU</name>
<dbReference type="EC" id="3.1.31.1"/>
<dbReference type="EMBL" id="V01281">
    <property type="protein sequence ID" value="CAA24594.1"/>
    <property type="molecule type" value="mRNA"/>
</dbReference>
<dbReference type="EMBL" id="M17123">
    <property type="protein sequence ID" value="AAA26659.1"/>
    <property type="molecule type" value="Genomic_DNA"/>
</dbReference>
<dbReference type="PIR" id="A00790">
    <property type="entry name" value="NCSAF"/>
</dbReference>
<dbReference type="PDB" id="1A2T">
    <property type="method" value="X-ray"/>
    <property type="resolution" value="1.96 A"/>
    <property type="chains" value="A=83-231"/>
</dbReference>
<dbReference type="PDB" id="1A2U">
    <property type="method" value="X-ray"/>
    <property type="resolution" value="2.00 A"/>
    <property type="chains" value="A=83-231"/>
</dbReference>
<dbReference type="PDB" id="1A3T">
    <property type="method" value="X-ray"/>
    <property type="resolution" value="2.10 A"/>
    <property type="chains" value="A=83-231"/>
</dbReference>
<dbReference type="PDB" id="1A3U">
    <property type="method" value="X-ray"/>
    <property type="resolution" value="2.05 A"/>
    <property type="chains" value="A=83-231"/>
</dbReference>
<dbReference type="PDB" id="1A3V">
    <property type="method" value="X-ray"/>
    <property type="resolution" value="2.20 A"/>
    <property type="chains" value="A=83-231"/>
</dbReference>
<dbReference type="PDB" id="1AEX">
    <property type="method" value="X-ray"/>
    <property type="resolution" value="2.10 A"/>
    <property type="chains" value="A=83-231"/>
</dbReference>
<dbReference type="PDB" id="1ENA">
    <property type="method" value="X-ray"/>
    <property type="resolution" value="2.15 A"/>
    <property type="chains" value="A=89-223"/>
</dbReference>
<dbReference type="PDB" id="1ENC">
    <property type="method" value="X-ray"/>
    <property type="resolution" value="1.95 A"/>
    <property type="chains" value="A=83-231"/>
</dbReference>
<dbReference type="PDB" id="1EQV">
    <property type="method" value="X-ray"/>
    <property type="resolution" value="1.94 A"/>
    <property type="chains" value="A=88-223"/>
</dbReference>
<dbReference type="PDB" id="1EY0">
    <property type="method" value="X-ray"/>
    <property type="resolution" value="1.60 A"/>
    <property type="chains" value="A=83-231"/>
</dbReference>
<dbReference type="PDB" id="1EY4">
    <property type="method" value="X-ray"/>
    <property type="resolution" value="1.60 A"/>
    <property type="chains" value="A=83-231"/>
</dbReference>
<dbReference type="PDB" id="1EY5">
    <property type="method" value="X-ray"/>
    <property type="resolution" value="1.70 A"/>
    <property type="chains" value="A=83-231"/>
</dbReference>
<dbReference type="PDB" id="1EY6">
    <property type="method" value="X-ray"/>
    <property type="resolution" value="1.75 A"/>
    <property type="chains" value="A=83-231"/>
</dbReference>
<dbReference type="PDB" id="1EY7">
    <property type="method" value="X-ray"/>
    <property type="resolution" value="1.88 A"/>
    <property type="chains" value="A=83-231"/>
</dbReference>
<dbReference type="PDB" id="1EY8">
    <property type="method" value="X-ray"/>
    <property type="resolution" value="1.75 A"/>
    <property type="chains" value="A=83-231"/>
</dbReference>
<dbReference type="PDB" id="1EY9">
    <property type="method" value="X-ray"/>
    <property type="resolution" value="1.72 A"/>
    <property type="chains" value="A=83-231"/>
</dbReference>
<dbReference type="PDB" id="1EYA">
    <property type="method" value="X-ray"/>
    <property type="resolution" value="2.00 A"/>
    <property type="chains" value="A=83-231"/>
</dbReference>
<dbReference type="PDB" id="1EYC">
    <property type="method" value="X-ray"/>
    <property type="resolution" value="1.85 A"/>
    <property type="chains" value="A=83-231"/>
</dbReference>
<dbReference type="PDB" id="1EYD">
    <property type="method" value="X-ray"/>
    <property type="resolution" value="1.70 A"/>
    <property type="chains" value="A=83-231"/>
</dbReference>
<dbReference type="PDB" id="1EZ6">
    <property type="method" value="X-ray"/>
    <property type="resolution" value="1.90 A"/>
    <property type="chains" value="A=83-231"/>
</dbReference>
<dbReference type="PDB" id="1EZ8">
    <property type="method" value="X-ray"/>
    <property type="resolution" value="1.85 A"/>
    <property type="chains" value="A=83-231"/>
</dbReference>
<dbReference type="PDB" id="1F2M">
    <property type="method" value="X-ray"/>
    <property type="resolution" value="2.00 A"/>
    <property type="chains" value="A=83-231"/>
</dbReference>
<dbReference type="PDB" id="1F2Y">
    <property type="method" value="X-ray"/>
    <property type="resolution" value="2.00 A"/>
    <property type="chains" value="A=83-231"/>
</dbReference>
<dbReference type="PDB" id="1F2Z">
    <property type="method" value="X-ray"/>
    <property type="resolution" value="1.80 A"/>
    <property type="chains" value="A=83-231"/>
</dbReference>
<dbReference type="PDB" id="1IHZ">
    <property type="method" value="X-ray"/>
    <property type="resolution" value="1.65 A"/>
    <property type="chains" value="A=83-231"/>
</dbReference>
<dbReference type="PDB" id="1II3">
    <property type="method" value="X-ray"/>
    <property type="resolution" value="1.72 A"/>
    <property type="chains" value="A=83-231"/>
</dbReference>
<dbReference type="PDB" id="1JOK">
    <property type="method" value="NMR"/>
    <property type="chains" value="A=83-231"/>
</dbReference>
<dbReference type="PDB" id="1JOO">
    <property type="method" value="NMR"/>
    <property type="chains" value="A=83-231"/>
</dbReference>
<dbReference type="PDB" id="1JOQ">
    <property type="method" value="NMR"/>
    <property type="chains" value="A=83-231"/>
</dbReference>
<dbReference type="PDB" id="1JOR">
    <property type="method" value="NMR"/>
    <property type="chains" value="A=83-231"/>
</dbReference>
<dbReference type="PDB" id="1KAA">
    <property type="method" value="X-ray"/>
    <property type="resolution" value="1.90 A"/>
    <property type="chains" value="A=88-223"/>
</dbReference>
<dbReference type="PDB" id="1KAB">
    <property type="method" value="X-ray"/>
    <property type="resolution" value="1.80 A"/>
    <property type="chains" value="A=88-223"/>
</dbReference>
<dbReference type="PDB" id="1KDA">
    <property type="method" value="X-ray"/>
    <property type="resolution" value="1.90 A"/>
    <property type="chains" value="A=83-231"/>
</dbReference>
<dbReference type="PDB" id="1KDB">
    <property type="method" value="X-ray"/>
    <property type="resolution" value="1.90 A"/>
    <property type="chains" value="A=83-231"/>
</dbReference>
<dbReference type="PDB" id="1KDC">
    <property type="method" value="X-ray"/>
    <property type="resolution" value="2.00 A"/>
    <property type="chains" value="A=83-231"/>
</dbReference>
<dbReference type="PDB" id="1NSN">
    <property type="method" value="X-ray"/>
    <property type="resolution" value="2.80 A"/>
    <property type="chains" value="S=83-231"/>
</dbReference>
<dbReference type="PDB" id="1NUC">
    <property type="method" value="X-ray"/>
    <property type="resolution" value="1.90 A"/>
    <property type="chains" value="A=83-231"/>
</dbReference>
<dbReference type="PDB" id="1RKN">
    <property type="method" value="NMR"/>
    <property type="chains" value="A=83-192"/>
</dbReference>
<dbReference type="PDB" id="1SNC">
    <property type="method" value="X-ray"/>
    <property type="resolution" value="1.65 A"/>
    <property type="chains" value="A=83-231"/>
</dbReference>
<dbReference type="PDB" id="1SND">
    <property type="method" value="X-ray"/>
    <property type="resolution" value="1.84 A"/>
    <property type="chains" value="A/B=83-231"/>
</dbReference>
<dbReference type="PDB" id="1SNM">
    <property type="method" value="X-ray"/>
    <property type="resolution" value="1.74 A"/>
    <property type="chains" value="A=83-231"/>
</dbReference>
<dbReference type="PDB" id="1SNO">
    <property type="method" value="X-ray"/>
    <property type="resolution" value="1.70 A"/>
    <property type="chains" value="A=83-231"/>
</dbReference>
<dbReference type="PDB" id="1SNP">
    <property type="method" value="X-ray"/>
    <property type="resolution" value="1.95 A"/>
    <property type="chains" value="A=83-231"/>
</dbReference>
<dbReference type="PDB" id="1SNQ">
    <property type="method" value="X-ray"/>
    <property type="resolution" value="1.70 A"/>
    <property type="chains" value="A=83-231"/>
</dbReference>
<dbReference type="PDB" id="1STA">
    <property type="method" value="X-ray"/>
    <property type="resolution" value="1.70 A"/>
    <property type="chains" value="A=83-231"/>
</dbReference>
<dbReference type="PDB" id="1STB">
    <property type="method" value="X-ray"/>
    <property type="resolution" value="2.00 A"/>
    <property type="chains" value="A=83-230"/>
</dbReference>
<dbReference type="PDB" id="1STG">
    <property type="method" value="X-ray"/>
    <property type="resolution" value="1.70 A"/>
    <property type="chains" value="A=83-231"/>
</dbReference>
<dbReference type="PDB" id="1STH">
    <property type="method" value="X-ray"/>
    <property type="resolution" value="1.85 A"/>
    <property type="chains" value="A=83-231"/>
</dbReference>
<dbReference type="PDB" id="1STN">
    <property type="method" value="X-ray"/>
    <property type="resolution" value="1.70 A"/>
    <property type="chains" value="A=83-231"/>
</dbReference>
<dbReference type="PDB" id="1STY">
    <property type="method" value="X-ray"/>
    <property type="resolution" value="1.67 A"/>
    <property type="chains" value="A=83-231"/>
</dbReference>
<dbReference type="PDB" id="1SYB">
    <property type="method" value="X-ray"/>
    <property type="resolution" value="1.80 A"/>
    <property type="chains" value="A=83-231"/>
</dbReference>
<dbReference type="PDB" id="1SYC">
    <property type="method" value="X-ray"/>
    <property type="resolution" value="1.80 A"/>
    <property type="chains" value="A=83-231"/>
</dbReference>
<dbReference type="PDB" id="1SYD">
    <property type="method" value="X-ray"/>
    <property type="resolution" value="1.70 A"/>
    <property type="chains" value="A=83-231"/>
</dbReference>
<dbReference type="PDB" id="1SYE">
    <property type="method" value="X-ray"/>
    <property type="resolution" value="1.80 A"/>
    <property type="chains" value="A=83-231"/>
</dbReference>
<dbReference type="PDB" id="1SYF">
    <property type="method" value="X-ray"/>
    <property type="resolution" value="1.80 A"/>
    <property type="chains" value="A=83-231"/>
</dbReference>
<dbReference type="PDB" id="1SYG">
    <property type="method" value="X-ray"/>
    <property type="resolution" value="1.90 A"/>
    <property type="chains" value="A=83-231"/>
</dbReference>
<dbReference type="PDB" id="1TQO">
    <property type="method" value="X-ray"/>
    <property type="resolution" value="2.00 A"/>
    <property type="chains" value="A=83-226"/>
</dbReference>
<dbReference type="PDB" id="1TR5">
    <property type="method" value="X-ray"/>
    <property type="resolution" value="2.10 A"/>
    <property type="chains" value="A=83-226"/>
</dbReference>
<dbReference type="PDB" id="1TT2">
    <property type="method" value="X-ray"/>
    <property type="resolution" value="1.85 A"/>
    <property type="chains" value="A=83-226"/>
</dbReference>
<dbReference type="PDB" id="1U9R">
    <property type="method" value="X-ray"/>
    <property type="resolution" value="2.10 A"/>
    <property type="chains" value="A=83-231"/>
</dbReference>
<dbReference type="PDB" id="2ENB">
    <property type="method" value="X-ray"/>
    <property type="resolution" value="2.05 A"/>
    <property type="chains" value="A=89-223"/>
</dbReference>
<dbReference type="PDB" id="2EXZ">
    <property type="method" value="X-ray"/>
    <property type="resolution" value="1.90 A"/>
    <property type="chains" value="A=83-231"/>
</dbReference>
<dbReference type="PDB" id="2EY1">
    <property type="method" value="X-ray"/>
    <property type="resolution" value="1.85 A"/>
    <property type="chains" value="A=83-231"/>
</dbReference>
<dbReference type="PDB" id="2EY2">
    <property type="method" value="X-ray"/>
    <property type="resolution" value="1.70 A"/>
    <property type="chains" value="A=83-231"/>
</dbReference>
<dbReference type="PDB" id="2EY5">
    <property type="method" value="X-ray"/>
    <property type="resolution" value="2.00 A"/>
    <property type="chains" value="A=83-231"/>
</dbReference>
<dbReference type="PDB" id="2EY6">
    <property type="method" value="X-ray"/>
    <property type="resolution" value="1.65 A"/>
    <property type="chains" value="A=83-231"/>
</dbReference>
<dbReference type="PDB" id="2EYF">
    <property type="method" value="X-ray"/>
    <property type="resolution" value="1.80 A"/>
    <property type="chains" value="A=83-231"/>
</dbReference>
<dbReference type="PDB" id="2EYH">
    <property type="method" value="X-ray"/>
    <property type="resolution" value="1.90 A"/>
    <property type="chains" value="A=83-231"/>
</dbReference>
<dbReference type="PDB" id="2EYJ">
    <property type="method" value="X-ray"/>
    <property type="resolution" value="1.85 A"/>
    <property type="chains" value="A=83-231"/>
</dbReference>
<dbReference type="PDB" id="2EYL">
    <property type="method" value="X-ray"/>
    <property type="resolution" value="1.70 A"/>
    <property type="chains" value="A=83-231"/>
</dbReference>
<dbReference type="PDB" id="2EYM">
    <property type="method" value="X-ray"/>
    <property type="resolution" value="1.80 A"/>
    <property type="chains" value="A=83-231"/>
</dbReference>
<dbReference type="PDB" id="2EYO">
    <property type="method" value="X-ray"/>
    <property type="resolution" value="1.70 A"/>
    <property type="chains" value="A=83-231"/>
</dbReference>
<dbReference type="PDB" id="2EYP">
    <property type="method" value="X-ray"/>
    <property type="resolution" value="1.80 A"/>
    <property type="chains" value="A=83-231"/>
</dbReference>
<dbReference type="PDB" id="2F0D">
    <property type="method" value="X-ray"/>
    <property type="resolution" value="2.50 A"/>
    <property type="chains" value="A=83-231"/>
</dbReference>
<dbReference type="PDB" id="2F0E">
    <property type="method" value="X-ray"/>
    <property type="resolution" value="1.95 A"/>
    <property type="chains" value="A=83-231"/>
</dbReference>
<dbReference type="PDB" id="2F0F">
    <property type="method" value="X-ray"/>
    <property type="resolution" value="2.15 A"/>
    <property type="chains" value="A=83-231"/>
</dbReference>
<dbReference type="PDB" id="2F0G">
    <property type="method" value="X-ray"/>
    <property type="resolution" value="1.90 A"/>
    <property type="chains" value="A=83-231"/>
</dbReference>
<dbReference type="PDB" id="2F0H">
    <property type="method" value="X-ray"/>
    <property type="resolution" value="2.15 A"/>
    <property type="chains" value="A=83-231"/>
</dbReference>
<dbReference type="PDB" id="2F0I">
    <property type="method" value="X-ray"/>
    <property type="resolution" value="1.80 A"/>
    <property type="chains" value="A=83-231"/>
</dbReference>
<dbReference type="PDB" id="2F0J">
    <property type="method" value="X-ray"/>
    <property type="resolution" value="1.80 A"/>
    <property type="chains" value="A=83-231"/>
</dbReference>
<dbReference type="PDB" id="2F0K">
    <property type="method" value="X-ray"/>
    <property type="resolution" value="1.90 A"/>
    <property type="chains" value="A=83-231"/>
</dbReference>
<dbReference type="PDB" id="2F0L">
    <property type="method" value="X-ray"/>
    <property type="resolution" value="1.90 A"/>
    <property type="chains" value="A=83-231"/>
</dbReference>
<dbReference type="PDB" id="2F0M">
    <property type="method" value="X-ray"/>
    <property type="resolution" value="2.00 A"/>
    <property type="chains" value="A=83-231"/>
</dbReference>
<dbReference type="PDB" id="2F0N">
    <property type="method" value="X-ray"/>
    <property type="resolution" value="1.70 A"/>
    <property type="chains" value="A=83-231"/>
</dbReference>
<dbReference type="PDB" id="2F0O">
    <property type="method" value="X-ray"/>
    <property type="resolution" value="1.90 A"/>
    <property type="chains" value="A=83-231"/>
</dbReference>
<dbReference type="PDB" id="2F0P">
    <property type="method" value="X-ray"/>
    <property type="resolution" value="2.05 A"/>
    <property type="chains" value="A=83-231"/>
</dbReference>
<dbReference type="PDB" id="2F0Q">
    <property type="method" value="X-ray"/>
    <property type="resolution" value="1.95 A"/>
    <property type="chains" value="A=83-231"/>
</dbReference>
<dbReference type="PDB" id="2F0S">
    <property type="method" value="X-ray"/>
    <property type="resolution" value="1.75 A"/>
    <property type="chains" value="A=83-231"/>
</dbReference>
<dbReference type="PDB" id="2F0T">
    <property type="method" value="X-ray"/>
    <property type="resolution" value="1.70 A"/>
    <property type="chains" value="A=83-231"/>
</dbReference>
<dbReference type="PDB" id="2F0U">
    <property type="method" value="X-ray"/>
    <property type="resolution" value="1.83 A"/>
    <property type="chains" value="A=83-231"/>
</dbReference>
<dbReference type="PDB" id="2F0V">
    <property type="method" value="X-ray"/>
    <property type="resolution" value="2.00 A"/>
    <property type="chains" value="A=83-231"/>
</dbReference>
<dbReference type="PDB" id="2F0W">
    <property type="method" value="X-ray"/>
    <property type="resolution" value="2.10 A"/>
    <property type="chains" value="A=83-231"/>
</dbReference>
<dbReference type="PDB" id="2F3V">
    <property type="method" value="NMR"/>
    <property type="chains" value="A=83-192"/>
</dbReference>
<dbReference type="PDB" id="2F3W">
    <property type="method" value="NMR"/>
    <property type="chains" value="A=83-192"/>
</dbReference>
<dbReference type="PDB" id="2FXY">
    <property type="method" value="NMR"/>
    <property type="chains" value="A=137-154"/>
</dbReference>
<dbReference type="PDB" id="2FXZ">
    <property type="method" value="NMR"/>
    <property type="chains" value="A=179-191"/>
</dbReference>
<dbReference type="PDB" id="2GSI">
    <property type="method" value="X-ray"/>
    <property type="resolution" value="2.81 A"/>
    <property type="chains" value="W/X/Y/Z=126-136"/>
</dbReference>
<dbReference type="PDB" id="2KHS">
    <property type="method" value="NMR"/>
    <property type="chains" value="A=83-203"/>
</dbReference>
<dbReference type="PDB" id="2NUC">
    <property type="method" value="X-ray"/>
    <property type="resolution" value="2.00 A"/>
    <property type="chains" value="A=83-231"/>
</dbReference>
<dbReference type="PDB" id="2OEO">
    <property type="method" value="X-ray"/>
    <property type="resolution" value="2.00 A"/>
    <property type="chains" value="A=83-226"/>
</dbReference>
<dbReference type="PDB" id="2OF1">
    <property type="method" value="X-ray"/>
    <property type="resolution" value="1.92 A"/>
    <property type="chains" value="A=83-226"/>
</dbReference>
<dbReference type="PDB" id="2PQE">
    <property type="method" value="NMR"/>
    <property type="chains" value="A=83-231"/>
</dbReference>
<dbReference type="PDB" id="2QDB">
    <property type="method" value="X-ray"/>
    <property type="resolution" value="2.20 A"/>
    <property type="chains" value="A=83-231"/>
</dbReference>
<dbReference type="PDB" id="2RBM">
    <property type="method" value="X-ray"/>
    <property type="resolution" value="1.90 A"/>
    <property type="chains" value="A=83-231"/>
</dbReference>
<dbReference type="PDB" id="2RDF">
    <property type="method" value="X-ray"/>
    <property type="resolution" value="2.01 A"/>
    <property type="chains" value="A=83-231"/>
</dbReference>
<dbReference type="PDB" id="2RKS">
    <property type="method" value="X-ray"/>
    <property type="resolution" value="2.01 A"/>
    <property type="chains" value="A=83-231"/>
</dbReference>
<dbReference type="PDB" id="2SNM">
    <property type="method" value="X-ray"/>
    <property type="resolution" value="1.97 A"/>
    <property type="chains" value="A=83-231"/>
</dbReference>
<dbReference type="PDB" id="2SNS">
    <property type="method" value="X-ray"/>
    <property type="resolution" value="1.50 A"/>
    <property type="chains" value="A=83-231"/>
</dbReference>
<dbReference type="PDB" id="2SOB">
    <property type="method" value="NMR"/>
    <property type="chains" value="A=83-185"/>
</dbReference>
<dbReference type="PDB" id="3BDC">
    <property type="method" value="X-ray"/>
    <property type="resolution" value="1.80 A"/>
    <property type="chains" value="A=83-231"/>
</dbReference>
<dbReference type="PDB" id="3C1E">
    <property type="method" value="X-ray"/>
    <property type="resolution" value="1.90 A"/>
    <property type="chains" value="A=83-231"/>
</dbReference>
<dbReference type="PDB" id="3C1F">
    <property type="method" value="X-ray"/>
    <property type="resolution" value="2.00 A"/>
    <property type="chains" value="A=83-231"/>
</dbReference>
<dbReference type="PDB" id="3D4D">
    <property type="method" value="X-ray"/>
    <property type="resolution" value="2.10 A"/>
    <property type="chains" value="A/B=83-231"/>
</dbReference>
<dbReference type="PDB" id="3D6C">
    <property type="method" value="X-ray"/>
    <property type="resolution" value="2.00 A"/>
    <property type="chains" value="A=83-231"/>
</dbReference>
<dbReference type="PDB" id="3DHQ">
    <property type="method" value="X-ray"/>
    <property type="resolution" value="2.15 A"/>
    <property type="chains" value="A=83-231"/>
</dbReference>
<dbReference type="PDB" id="3DMU">
    <property type="method" value="X-ray"/>
    <property type="resolution" value="1.80 A"/>
    <property type="chains" value="A=83-231"/>
</dbReference>
<dbReference type="PDB" id="3E5S">
    <property type="method" value="X-ray"/>
    <property type="resolution" value="2.00 A"/>
    <property type="chains" value="A/B=83-231"/>
</dbReference>
<dbReference type="PDB" id="3EJI">
    <property type="method" value="X-ray"/>
    <property type="resolution" value="1.90 A"/>
    <property type="chains" value="A=83-231"/>
</dbReference>
<dbReference type="PDB" id="3ERO">
    <property type="method" value="X-ray"/>
    <property type="resolution" value="1.85 A"/>
    <property type="chains" value="A=83-231"/>
</dbReference>
<dbReference type="PDB" id="3ERQ">
    <property type="method" value="X-ray"/>
    <property type="resolution" value="2.10 A"/>
    <property type="chains" value="A=83-231"/>
</dbReference>
<dbReference type="PDB" id="3EVQ">
    <property type="method" value="X-ray"/>
    <property type="resolution" value="2.00 A"/>
    <property type="chains" value="A=83-231"/>
</dbReference>
<dbReference type="PDB" id="3H6M">
    <property type="method" value="X-ray"/>
    <property type="resolution" value="1.70 A"/>
    <property type="chains" value="A=83-231"/>
</dbReference>
<dbReference type="PDB" id="3HEJ">
    <property type="method" value="X-ray"/>
    <property type="resolution" value="1.80 A"/>
    <property type="chains" value="A/B/C/D=83-231"/>
</dbReference>
<dbReference type="PDB" id="3HZX">
    <property type="method" value="X-ray"/>
    <property type="resolution" value="2.00 A"/>
    <property type="chains" value="A=83-231"/>
</dbReference>
<dbReference type="PDB" id="3ITP">
    <property type="method" value="X-ray"/>
    <property type="resolution" value="1.75 A"/>
    <property type="chains" value="A=83-231"/>
</dbReference>
<dbReference type="PDB" id="3LX0">
    <property type="method" value="X-ray"/>
    <property type="resolution" value="1.50 A"/>
    <property type="chains" value="A=83-231"/>
</dbReference>
<dbReference type="PDB" id="3MEH">
    <property type="method" value="X-ray"/>
    <property type="resolution" value="1.50 A"/>
    <property type="chains" value="A=83-231"/>
</dbReference>
<dbReference type="PDB" id="3MHB">
    <property type="method" value="X-ray"/>
    <property type="resolution" value="1.55 A"/>
    <property type="chains" value="A=83-231"/>
</dbReference>
<dbReference type="PDB" id="3MXP">
    <property type="method" value="X-ray"/>
    <property type="resolution" value="1.61 A"/>
    <property type="chains" value="A=83-231"/>
</dbReference>
<dbReference type="PDB" id="3MZ5">
    <property type="method" value="X-ray"/>
    <property type="resolution" value="1.58 A"/>
    <property type="chains" value="A=83-231"/>
</dbReference>
<dbReference type="PDB" id="3NHH">
    <property type="method" value="X-ray"/>
    <property type="resolution" value="2.00 A"/>
    <property type="chains" value="A=83-231"/>
</dbReference>
<dbReference type="PDB" id="3NK9">
    <property type="method" value="X-ray"/>
    <property type="resolution" value="1.65 A"/>
    <property type="chains" value="A=83-231"/>
</dbReference>
<dbReference type="PDB" id="3NP8">
    <property type="method" value="X-ray"/>
    <property type="resolution" value="1.70 A"/>
    <property type="chains" value="A=83-231"/>
</dbReference>
<dbReference type="PDB" id="3NQT">
    <property type="method" value="X-ray"/>
    <property type="resolution" value="1.90 A"/>
    <property type="chains" value="A=83-231"/>
</dbReference>
<dbReference type="PDB" id="3NUC">
    <property type="method" value="X-ray"/>
    <property type="resolution" value="1.90 A"/>
    <property type="chains" value="A=83-231"/>
</dbReference>
<dbReference type="PDB" id="3NXW">
    <property type="method" value="X-ray"/>
    <property type="resolution" value="1.65 A"/>
    <property type="chains" value="A=83-231"/>
</dbReference>
<dbReference type="PDB" id="3OSO">
    <property type="method" value="X-ray"/>
    <property type="resolution" value="1.60 A"/>
    <property type="chains" value="A=83-231"/>
</dbReference>
<dbReference type="PDB" id="3OWF">
    <property type="method" value="X-ray"/>
    <property type="resolution" value="1.85 A"/>
    <property type="chains" value="A=83-231"/>
</dbReference>
<dbReference type="PDB" id="3P1H">
    <property type="method" value="X-ray"/>
    <property type="resolution" value="1.79 A"/>
    <property type="chains" value="A=83-231"/>
</dbReference>
<dbReference type="PDB" id="3P75">
    <property type="method" value="X-ray"/>
    <property type="resolution" value="1.90 A"/>
    <property type="chains" value="A=89-223"/>
</dbReference>
<dbReference type="PDB" id="3PMF">
    <property type="method" value="X-ray"/>
    <property type="resolution" value="1.60 A"/>
    <property type="chains" value="A=83-231"/>
</dbReference>
<dbReference type="PDB" id="3QB3">
    <property type="method" value="X-ray"/>
    <property type="resolution" value="1.63 A"/>
    <property type="chains" value="A=83-231"/>
</dbReference>
<dbReference type="PDB" id="3RUZ">
    <property type="method" value="X-ray"/>
    <property type="resolution" value="1.58 A"/>
    <property type="chains" value="A=83-231"/>
</dbReference>
<dbReference type="PDB" id="3S9W">
    <property type="method" value="X-ray"/>
    <property type="resolution" value="1.90 A"/>
    <property type="chains" value="A=83-231"/>
</dbReference>
<dbReference type="PDB" id="3SHL">
    <property type="method" value="X-ray"/>
    <property type="resolution" value="1.48 A"/>
    <property type="chains" value="A=83-231"/>
</dbReference>
<dbReference type="PDB" id="3SK4">
    <property type="method" value="X-ray"/>
    <property type="resolution" value="1.85 A"/>
    <property type="chains" value="A=83-231"/>
</dbReference>
<dbReference type="PDB" id="3SK5">
    <property type="method" value="X-ray"/>
    <property type="resolution" value="1.70 A"/>
    <property type="chains" value="A=83-231"/>
</dbReference>
<dbReference type="PDB" id="3SK6">
    <property type="method" value="X-ray"/>
    <property type="resolution" value="1.80 A"/>
    <property type="chains" value="A=83-231"/>
</dbReference>
<dbReference type="PDB" id="3SK8">
    <property type="method" value="X-ray"/>
    <property type="resolution" value="1.90 A"/>
    <property type="chains" value="A=83-231"/>
</dbReference>
<dbReference type="PDB" id="3SR1">
    <property type="method" value="X-ray"/>
    <property type="resolution" value="1.45 A"/>
    <property type="chains" value="A=83-231"/>
</dbReference>
<dbReference type="PDB" id="3SXH">
    <property type="method" value="X-ray"/>
    <property type="resolution" value="1.40 A"/>
    <property type="chains" value="A=83-231"/>
</dbReference>
<dbReference type="PDB" id="3T13">
    <property type="method" value="X-ray"/>
    <property type="resolution" value="1.80 A"/>
    <property type="chains" value="A/B=83-231"/>
</dbReference>
<dbReference type="PDB" id="3T16">
    <property type="method" value="X-ray"/>
    <property type="resolution" value="1.80 A"/>
    <property type="chains" value="A=83-231"/>
</dbReference>
<dbReference type="PDB" id="3TME">
    <property type="method" value="X-ray"/>
    <property type="resolution" value="1.40 A"/>
    <property type="chains" value="A=83-231"/>
</dbReference>
<dbReference type="PDB" id="3TP5">
    <property type="method" value="X-ray"/>
    <property type="resolution" value="1.80 A"/>
    <property type="chains" value="A=83-231"/>
</dbReference>
<dbReference type="PDB" id="3TP6">
    <property type="method" value="X-ray"/>
    <property type="resolution" value="1.80 A"/>
    <property type="chains" value="A=83-231"/>
</dbReference>
<dbReference type="PDB" id="3TP7">
    <property type="method" value="X-ray"/>
    <property type="resolution" value="1.90 A"/>
    <property type="chains" value="A=83-231"/>
</dbReference>
<dbReference type="PDB" id="3TP8">
    <property type="method" value="X-ray"/>
    <property type="resolution" value="1.60 A"/>
    <property type="chains" value="A=83-231"/>
</dbReference>
<dbReference type="PDB" id="3U9O">
    <property type="method" value="X-ray"/>
    <property type="resolution" value="1.95 A"/>
    <property type="chains" value="A=83-231"/>
</dbReference>
<dbReference type="PDB" id="3V2T">
    <property type="method" value="X-ray"/>
    <property type="resolution" value="1.80 A"/>
    <property type="chains" value="A=83-231"/>
</dbReference>
<dbReference type="PDB" id="3VA5">
    <property type="method" value="X-ray"/>
    <property type="resolution" value="1.55 A"/>
    <property type="chains" value="A=83-231"/>
</dbReference>
<dbReference type="PDB" id="4DF7">
    <property type="method" value="X-ray"/>
    <property type="resolution" value="1.50 A"/>
    <property type="chains" value="A=83-231"/>
</dbReference>
<dbReference type="PDB" id="4DFA">
    <property type="method" value="X-ray"/>
    <property type="resolution" value="1.40 A"/>
    <property type="chains" value="A=83-231"/>
</dbReference>
<dbReference type="PDB" id="4DGZ">
    <property type="method" value="X-ray"/>
    <property type="resolution" value="1.47 A"/>
    <property type="chains" value="A=83-231"/>
</dbReference>
<dbReference type="PDB" id="4DU9">
    <property type="method" value="X-ray"/>
    <property type="resolution" value="1.63 A"/>
    <property type="chains" value="A=83-231"/>
</dbReference>
<dbReference type="PDB" id="4E6I">
    <property type="method" value="X-ray"/>
    <property type="resolution" value="2.00 A"/>
    <property type="chains" value="A/B=83-231"/>
</dbReference>
<dbReference type="PDB" id="4EQN">
    <property type="method" value="X-ray"/>
    <property type="resolution" value="1.80 A"/>
    <property type="chains" value="A=83-231"/>
</dbReference>
<dbReference type="PDB" id="4EQO">
    <property type="method" value="X-ray"/>
    <property type="resolution" value="1.70 A"/>
    <property type="chains" value="A=83-231"/>
</dbReference>
<dbReference type="PDB" id="4EQP">
    <property type="method" value="X-ray"/>
    <property type="resolution" value="1.35 A"/>
    <property type="chains" value="A=83-231"/>
</dbReference>
<dbReference type="PDB" id="4EVO">
    <property type="method" value="X-ray"/>
    <property type="resolution" value="1.95 A"/>
    <property type="chains" value="A=83-231"/>
</dbReference>
<dbReference type="PDB" id="4F7X">
    <property type="method" value="X-ray"/>
    <property type="resolution" value="1.70 A"/>
    <property type="chains" value="A=83-231"/>
</dbReference>
<dbReference type="PDB" id="4F8M">
    <property type="method" value="X-ray"/>
    <property type="resolution" value="1.60 A"/>
    <property type="chains" value="A=83-231"/>
</dbReference>
<dbReference type="PDB" id="4G57">
    <property type="method" value="X-ray"/>
    <property type="resolution" value="1.81 A"/>
    <property type="chains" value="A=89-223"/>
</dbReference>
<dbReference type="PDB" id="4H7B">
    <property type="method" value="X-ray"/>
    <property type="resolution" value="1.60 A"/>
    <property type="chains" value="A=83-231"/>
</dbReference>
<dbReference type="PDB" id="4HMI">
    <property type="method" value="X-ray"/>
    <property type="resolution" value="1.75 A"/>
    <property type="chains" value="A=83-231"/>
</dbReference>
<dbReference type="PDB" id="4HMJ">
    <property type="method" value="X-ray"/>
    <property type="resolution" value="1.35 A"/>
    <property type="chains" value="A=83-231"/>
</dbReference>
<dbReference type="PDB" id="4HTH">
    <property type="method" value="X-ray"/>
    <property type="resolution" value="1.75 A"/>
    <property type="chains" value="A=83-231"/>
</dbReference>
<dbReference type="PDB" id="4I65">
    <property type="method" value="X-ray"/>
    <property type="resolution" value="1.61 A"/>
    <property type="chains" value="A=88-223"/>
</dbReference>
<dbReference type="PDB" id="4IAL">
    <property type="method" value="X-ray"/>
    <property type="resolution" value="1.60 A"/>
    <property type="chains" value="A=83-231"/>
</dbReference>
<dbReference type="PDB" id="4ID6">
    <property type="method" value="X-ray"/>
    <property type="resolution" value="1.90 A"/>
    <property type="chains" value="A=83-231"/>
</dbReference>
<dbReference type="PDB" id="4IUN">
    <property type="method" value="X-ray"/>
    <property type="resolution" value="1.60 A"/>
    <property type="chains" value="A=83-231"/>
</dbReference>
<dbReference type="PDB" id="4IZ8">
    <property type="method" value="X-ray"/>
    <property type="resolution" value="1.70 A"/>
    <property type="chains" value="A=83-231"/>
</dbReference>
<dbReference type="PDB" id="4J1M">
    <property type="method" value="X-ray"/>
    <property type="resolution" value="1.65 A"/>
    <property type="chains" value="A=83-231"/>
</dbReference>
<dbReference type="PDB" id="4J6H">
    <property type="method" value="X-ray"/>
    <property type="resolution" value="1.60 A"/>
    <property type="chains" value="A=83-231"/>
</dbReference>
<dbReference type="PDB" id="4K14">
    <property type="method" value="X-ray"/>
    <property type="resolution" value="1.60 A"/>
    <property type="chains" value="A=88-223"/>
</dbReference>
<dbReference type="PDB" id="4K2K">
    <property type="method" value="X-ray"/>
    <property type="resolution" value="1.65 A"/>
    <property type="chains" value="A=83-231"/>
</dbReference>
<dbReference type="PDB" id="4K2L">
    <property type="method" value="X-ray"/>
    <property type="resolution" value="1.55 A"/>
    <property type="chains" value="A=83-231"/>
</dbReference>
<dbReference type="PDB" id="4K5V">
    <property type="method" value="X-ray"/>
    <property type="resolution" value="1.75 A"/>
    <property type="chains" value="A=83-231"/>
</dbReference>
<dbReference type="PDB" id="4K5W">
    <property type="method" value="X-ray"/>
    <property type="resolution" value="1.65 A"/>
    <property type="chains" value="A=83-231"/>
</dbReference>
<dbReference type="PDB" id="4K5X">
    <property type="method" value="X-ray"/>
    <property type="resolution" value="1.65 A"/>
    <property type="chains" value="A=83-231"/>
</dbReference>
<dbReference type="PDB" id="4K6D">
    <property type="method" value="X-ray"/>
    <property type="resolution" value="1.65 A"/>
    <property type="chains" value="A=83-231"/>
</dbReference>
<dbReference type="PDB" id="4K8I">
    <property type="method" value="X-ray"/>
    <property type="resolution" value="2.10 A"/>
    <property type="chains" value="A=89-223"/>
</dbReference>
<dbReference type="PDB" id="4K8J">
    <property type="method" value="X-ray"/>
    <property type="resolution" value="2.00 A"/>
    <property type="chains" value="A=89-223"/>
</dbReference>
<dbReference type="PDB" id="4KD3">
    <property type="method" value="X-ray"/>
    <property type="resolution" value="1.75 A"/>
    <property type="chains" value="A=83-231"/>
</dbReference>
<dbReference type="PDB" id="4KD4">
    <property type="method" value="X-ray"/>
    <property type="resolution" value="1.55 A"/>
    <property type="chains" value="A=83-231"/>
</dbReference>
<dbReference type="PDB" id="4KHV">
    <property type="method" value="X-ray"/>
    <property type="resolution" value="1.60 A"/>
    <property type="chains" value="A=83-231"/>
</dbReference>
<dbReference type="PDB" id="4KJN">
    <property type="method" value="X-ray"/>
    <property type="resolution" value="1.55 A"/>
    <property type="chains" value="A=83-231"/>
</dbReference>
<dbReference type="PDB" id="4KJO">
    <property type="method" value="X-ray"/>
    <property type="resolution" value="1.90 A"/>
    <property type="chains" value="A=83-231"/>
</dbReference>
<dbReference type="PDB" id="4KTA">
    <property type="method" value="X-ray"/>
    <property type="resolution" value="1.95 A"/>
    <property type="chains" value="A=83-231"/>
</dbReference>
<dbReference type="PDB" id="4KV6">
    <property type="method" value="X-ray"/>
    <property type="resolution" value="1.55 A"/>
    <property type="chains" value="A=83-231"/>
</dbReference>
<dbReference type="PDB" id="4KY5">
    <property type="method" value="X-ray"/>
    <property type="resolution" value="1.40 A"/>
    <property type="chains" value="A=83-231"/>
</dbReference>
<dbReference type="PDB" id="4KY6">
    <property type="method" value="X-ray"/>
    <property type="resolution" value="1.70 A"/>
    <property type="chains" value="A=83-231"/>
</dbReference>
<dbReference type="PDB" id="4KY7">
    <property type="method" value="X-ray"/>
    <property type="resolution" value="1.55 A"/>
    <property type="chains" value="A=83-231"/>
</dbReference>
<dbReference type="PDB" id="4LAA">
    <property type="method" value="X-ray"/>
    <property type="resolution" value="1.58 A"/>
    <property type="chains" value="A=83-231"/>
</dbReference>
<dbReference type="PDB" id="4ME5">
    <property type="method" value="X-ray"/>
    <property type="resolution" value="1.80 A"/>
    <property type="chains" value="A=83-231"/>
</dbReference>
<dbReference type="PDB" id="4MIU">
    <property type="method" value="X-ray"/>
    <property type="resolution" value="1.67 A"/>
    <property type="chains" value="A=83-231"/>
</dbReference>
<dbReference type="PDB" id="4N9P">
    <property type="method" value="X-ray"/>
    <property type="resolution" value="1.40 A"/>
    <property type="chains" value="A=83-231"/>
</dbReference>
<dbReference type="PDB" id="4N9T">
    <property type="method" value="X-ray"/>
    <property type="resolution" value="1.60 A"/>
    <property type="chains" value="A=83-231"/>
</dbReference>
<dbReference type="PDB" id="4NDX">
    <property type="method" value="X-ray"/>
    <property type="resolution" value="1.50 A"/>
    <property type="chains" value="A=83-231"/>
</dbReference>
<dbReference type="PDB" id="4NKL">
    <property type="method" value="X-ray"/>
    <property type="resolution" value="1.60 A"/>
    <property type="chains" value="A=83-231"/>
</dbReference>
<dbReference type="PDB" id="4NMZ">
    <property type="method" value="X-ray"/>
    <property type="resolution" value="1.70 A"/>
    <property type="chains" value="A=83-231"/>
</dbReference>
<dbReference type="PDB" id="4NP5">
    <property type="method" value="X-ray"/>
    <property type="resolution" value="1.50 A"/>
    <property type="chains" value="A=83-231"/>
</dbReference>
<dbReference type="PDB" id="4ODG">
    <property type="method" value="X-ray"/>
    <property type="resolution" value="1.73 A"/>
    <property type="chains" value="A=83-231"/>
</dbReference>
<dbReference type="PDB" id="4OL7">
    <property type="method" value="X-ray"/>
    <property type="resolution" value="1.67 A"/>
    <property type="chains" value="A/B=83-231"/>
</dbReference>
<dbReference type="PDB" id="4PMB">
    <property type="method" value="X-ray"/>
    <property type="resolution" value="1.80 A"/>
    <property type="chains" value="A=83-231"/>
</dbReference>
<dbReference type="PDB" id="4PMC">
    <property type="method" value="X-ray"/>
    <property type="resolution" value="1.65 A"/>
    <property type="chains" value="A=83-231"/>
</dbReference>
<dbReference type="PDB" id="4PNY">
    <property type="method" value="X-ray"/>
    <property type="resolution" value="1.68 A"/>
    <property type="chains" value="A=83-231"/>
</dbReference>
<dbReference type="PDB" id="4QB4">
    <property type="method" value="X-ray"/>
    <property type="resolution" value="1.60 A"/>
    <property type="chains" value="A=88-223"/>
</dbReference>
<dbReference type="PDB" id="4QF4">
    <property type="method" value="X-ray"/>
    <property type="resolution" value="1.80 A"/>
    <property type="chains" value="A/B=83-231"/>
</dbReference>
<dbReference type="PDB" id="4R8N">
    <property type="method" value="X-ray"/>
    <property type="resolution" value="1.65 A"/>
    <property type="chains" value="A=83-223"/>
</dbReference>
<dbReference type="PDB" id="4RKB">
    <property type="method" value="X-ray"/>
    <property type="resolution" value="1.88 A"/>
    <property type="chains" value="A=83-231"/>
</dbReference>
<dbReference type="PDB" id="4RKL">
    <property type="method" value="X-ray"/>
    <property type="resolution" value="1.66 A"/>
    <property type="chains" value="A=83-231"/>
</dbReference>
<dbReference type="PDB" id="4S3S">
    <property type="method" value="X-ray"/>
    <property type="resolution" value="1.64 A"/>
    <property type="chains" value="A=83-231"/>
</dbReference>
<dbReference type="PDB" id="4TRD">
    <property type="method" value="X-ray"/>
    <property type="resolution" value="1.60 A"/>
    <property type="chains" value="A=83-231"/>
</dbReference>
<dbReference type="PDB" id="4WOR">
    <property type="method" value="X-ray"/>
    <property type="resolution" value="1.60 A"/>
    <property type="chains" value="A=83-231"/>
</dbReference>
<dbReference type="PDB" id="4YIJ">
    <property type="method" value="X-ray"/>
    <property type="resolution" value="1.64 A"/>
    <property type="chains" value="A/B=83-231"/>
</dbReference>
<dbReference type="PDB" id="4ZQ3">
    <property type="method" value="X-ray"/>
    <property type="resolution" value="1.90 A"/>
    <property type="chains" value="A=83-231"/>
</dbReference>
<dbReference type="PDB" id="4ZUI">
    <property type="method" value="X-ray"/>
    <property type="resolution" value="1.70 A"/>
    <property type="chains" value="A=83-231"/>
</dbReference>
<dbReference type="PDB" id="4ZUJ">
    <property type="method" value="X-ray"/>
    <property type="resolution" value="1.72 A"/>
    <property type="chains" value="A=83-231"/>
</dbReference>
<dbReference type="PDB" id="5C3W">
    <property type="method" value="X-ray"/>
    <property type="resolution" value="1.72 A"/>
    <property type="chains" value="A=83-231"/>
</dbReference>
<dbReference type="PDB" id="5C3X">
    <property type="method" value="X-ray"/>
    <property type="resolution" value="1.95 A"/>
    <property type="chains" value="A=83-231"/>
</dbReference>
<dbReference type="PDB" id="5C4H">
    <property type="method" value="X-ray"/>
    <property type="resolution" value="1.80 A"/>
    <property type="chains" value="A=83-231"/>
</dbReference>
<dbReference type="PDB" id="5C4Z">
    <property type="method" value="X-ray"/>
    <property type="resolution" value="1.62 A"/>
    <property type="chains" value="A=83-231"/>
</dbReference>
<dbReference type="PDB" id="5C5L">
    <property type="method" value="X-ray"/>
    <property type="resolution" value="1.75 A"/>
    <property type="chains" value="A=83-231"/>
</dbReference>
<dbReference type="PDB" id="5C5M">
    <property type="method" value="X-ray"/>
    <property type="resolution" value="1.70 A"/>
    <property type="chains" value="A=83-231"/>
</dbReference>
<dbReference type="PDB" id="5C6A">
    <property type="method" value="X-ray"/>
    <property type="resolution" value="1.85 A"/>
    <property type="chains" value="A=83-231"/>
</dbReference>
<dbReference type="PDB" id="5CC4">
    <property type="method" value="X-ray"/>
    <property type="resolution" value="1.90 A"/>
    <property type="chains" value="A=83-231"/>
</dbReference>
<dbReference type="PDB" id="5CGK">
    <property type="method" value="X-ray"/>
    <property type="resolution" value="1.85 A"/>
    <property type="chains" value="A=83-231"/>
</dbReference>
<dbReference type="PDB" id="5CR3">
    <property type="method" value="X-ray"/>
    <property type="resolution" value="1.80 A"/>
    <property type="chains" value="A=83-231"/>
</dbReference>
<dbReference type="PDB" id="5CV4">
    <property type="method" value="X-ray"/>
    <property type="resolution" value="1.80 A"/>
    <property type="chains" value="A=83-231"/>
</dbReference>
<dbReference type="PDB" id="5CV5">
    <property type="method" value="X-ray"/>
    <property type="resolution" value="1.80 A"/>
    <property type="chains" value="A/B=83-231"/>
</dbReference>
<dbReference type="PDB" id="5CV6">
    <property type="method" value="X-ray"/>
    <property type="resolution" value="1.95 A"/>
    <property type="chains" value="A=83-231"/>
</dbReference>
<dbReference type="PDB" id="5CV7">
    <property type="method" value="X-ray"/>
    <property type="resolution" value="1.65 A"/>
    <property type="chains" value="A=83-231"/>
</dbReference>
<dbReference type="PDB" id="5CV8">
    <property type="method" value="X-ray"/>
    <property type="resolution" value="1.58 A"/>
    <property type="chains" value="A=83-231"/>
</dbReference>
<dbReference type="PDB" id="5CV9">
    <property type="method" value="X-ray"/>
    <property type="resolution" value="1.62 A"/>
    <property type="chains" value="A=83-231"/>
</dbReference>
<dbReference type="PDB" id="5DEH">
    <property type="method" value="X-ray"/>
    <property type="resolution" value="1.70 A"/>
    <property type="chains" value="A=83-231"/>
</dbReference>
<dbReference type="PDB" id="5E1F">
    <property type="method" value="X-ray"/>
    <property type="resolution" value="1.90 A"/>
    <property type="chains" value="A=83-231"/>
</dbReference>
<dbReference type="PDB" id="5E3F">
    <property type="method" value="X-ray"/>
    <property type="resolution" value="1.75 A"/>
    <property type="chains" value="A=83-231"/>
</dbReference>
<dbReference type="PDB" id="5EGT">
    <property type="method" value="X-ray"/>
    <property type="resolution" value="1.85 A"/>
    <property type="chains" value="A=83-231"/>
</dbReference>
<dbReference type="PDB" id="5EKK">
    <property type="method" value="X-ray"/>
    <property type="resolution" value="2.10 A"/>
    <property type="chains" value="A=83-231"/>
</dbReference>
<dbReference type="PDB" id="5EKL">
    <property type="method" value="X-ray"/>
    <property type="resolution" value="2.10 A"/>
    <property type="chains" value="A=83-231"/>
</dbReference>
<dbReference type="PDB" id="5F2D">
    <property type="method" value="X-ray"/>
    <property type="resolution" value="1.70 A"/>
    <property type="chains" value="A=83-231"/>
</dbReference>
<dbReference type="PDB" id="5HGT">
    <property type="method" value="X-ray"/>
    <property type="resolution" value="1.75 A"/>
    <property type="chains" value="A=83-231"/>
</dbReference>
<dbReference type="PDB" id="5HUR">
    <property type="method" value="X-ray"/>
    <property type="resolution" value="1.50 A"/>
    <property type="chains" value="A=83-231"/>
</dbReference>
<dbReference type="PDB" id="5I6W">
    <property type="method" value="X-ray"/>
    <property type="resolution" value="1.90 A"/>
    <property type="chains" value="A=83-231"/>
</dbReference>
<dbReference type="PDB" id="5I6Y">
    <property type="method" value="X-ray"/>
    <property type="resolution" value="1.90 A"/>
    <property type="chains" value="A=83-231"/>
</dbReference>
<dbReference type="PDB" id="5I9O">
    <property type="method" value="X-ray"/>
    <property type="resolution" value="1.95 A"/>
    <property type="chains" value="A/B=83-231"/>
</dbReference>
<dbReference type="PDB" id="5I9P">
    <property type="method" value="X-ray"/>
    <property type="resolution" value="1.85 A"/>
    <property type="chains" value="A=83-231"/>
</dbReference>
<dbReference type="PDB" id="5IGB">
    <property type="method" value="X-ray"/>
    <property type="resolution" value="1.80 A"/>
    <property type="chains" value="A=83-231"/>
</dbReference>
<dbReference type="PDB" id="5IGC">
    <property type="method" value="X-ray"/>
    <property type="resolution" value="1.80 A"/>
    <property type="chains" value="A=83-231"/>
</dbReference>
<dbReference type="PDB" id="5IGD">
    <property type="method" value="X-ray"/>
    <property type="resolution" value="1.80 A"/>
    <property type="chains" value="A=83-231"/>
</dbReference>
<dbReference type="PDB" id="5IGE">
    <property type="method" value="X-ray"/>
    <property type="resolution" value="1.80 A"/>
    <property type="chains" value="A=83-231"/>
</dbReference>
<dbReference type="PDB" id="5IGF">
    <property type="method" value="X-ray"/>
    <property type="resolution" value="1.70 A"/>
    <property type="chains" value="A=83-231"/>
</dbReference>
<dbReference type="PDB" id="5IGG">
    <property type="method" value="X-ray"/>
    <property type="resolution" value="1.70 A"/>
    <property type="chains" value="A=83-231"/>
</dbReference>
<dbReference type="PDB" id="5IIF">
    <property type="method" value="X-ray"/>
    <property type="resolution" value="1.85 A"/>
    <property type="chains" value="A=83-231"/>
</dbReference>
<dbReference type="PDB" id="5IOC">
    <property type="method" value="X-ray"/>
    <property type="resolution" value="1.90 A"/>
    <property type="chains" value="A=83-231"/>
</dbReference>
<dbReference type="PDB" id="5IOD">
    <property type="method" value="X-ray"/>
    <property type="resolution" value="1.60 A"/>
    <property type="chains" value="A=83-231"/>
</dbReference>
<dbReference type="PDB" id="5ISR">
    <property type="method" value="X-ray"/>
    <property type="resolution" value="1.90 A"/>
    <property type="chains" value="A=83-231"/>
</dbReference>
<dbReference type="PDB" id="5J1Z">
    <property type="method" value="X-ray"/>
    <property type="resolution" value="1.73 A"/>
    <property type="chains" value="A=83-231"/>
</dbReference>
<dbReference type="PDB" id="5J22">
    <property type="method" value="X-ray"/>
    <property type="resolution" value="1.90 A"/>
    <property type="chains" value="A=83-231"/>
</dbReference>
<dbReference type="PDB" id="5JAV">
    <property type="method" value="X-ray"/>
    <property type="resolution" value="1.89 A"/>
    <property type="chains" value="A=83-231"/>
</dbReference>
<dbReference type="PDB" id="5JOB">
    <property type="method" value="X-ray"/>
    <property type="resolution" value="1.45 A"/>
    <property type="chains" value="A=83-231"/>
</dbReference>
<dbReference type="PDB" id="5K5P">
    <property type="method" value="X-ray"/>
    <property type="resolution" value="1.83 A"/>
    <property type="chains" value="A=83-231"/>
</dbReference>
<dbReference type="PDB" id="5KEE">
    <property type="method" value="X-ray"/>
    <property type="resolution" value="1.50 A"/>
    <property type="chains" value="A=83-231"/>
</dbReference>
<dbReference type="PDB" id="5KGU">
    <property type="method" value="X-ray"/>
    <property type="resolution" value="1.90 A"/>
    <property type="chains" value="A=83-231"/>
</dbReference>
<dbReference type="PDB" id="5KIX">
    <property type="method" value="X-ray"/>
    <property type="resolution" value="1.75 A"/>
    <property type="chains" value="A=83-231"/>
</dbReference>
<dbReference type="PDB" id="5KRU">
    <property type="method" value="X-ray"/>
    <property type="resolution" value="1.60 A"/>
    <property type="chains" value="A=83-231"/>
</dbReference>
<dbReference type="PDB" id="5KYI">
    <property type="method" value="X-ray"/>
    <property type="resolution" value="1.70 A"/>
    <property type="chains" value="A=83-231"/>
</dbReference>
<dbReference type="PDB" id="5KYL">
    <property type="method" value="X-ray"/>
    <property type="resolution" value="1.85 A"/>
    <property type="chains" value="A=83-231"/>
</dbReference>
<dbReference type="PDB" id="5NUC">
    <property type="method" value="X-ray"/>
    <property type="resolution" value="2.10 A"/>
    <property type="chains" value="A=83-231"/>
</dbReference>
<dbReference type="PDB" id="6AMF">
    <property type="method" value="X-ray"/>
    <property type="resolution" value="1.85 A"/>
    <property type="chains" value="A=83-231"/>
</dbReference>
<dbReference type="PDB" id="6B8R">
    <property type="method" value="X-ray"/>
    <property type="resolution" value="1.65 A"/>
    <property type="chains" value="A=83-231"/>
</dbReference>
<dbReference type="PDB" id="6EEG">
    <property type="method" value="X-ray"/>
    <property type="resolution" value="1.95 A"/>
    <property type="chains" value="A=83-231"/>
</dbReference>
<dbReference type="PDB" id="6EEK">
    <property type="method" value="X-ray"/>
    <property type="resolution" value="2.20 A"/>
    <property type="chains" value="A=83-231"/>
</dbReference>
<dbReference type="PDB" id="6OK8">
    <property type="method" value="X-ray"/>
    <property type="resolution" value="1.80 A"/>
    <property type="chains" value="A=83-231"/>
</dbReference>
<dbReference type="PDB" id="6U0W">
    <property type="method" value="X-ray"/>
    <property type="resolution" value="1.90 A"/>
    <property type="chains" value="A=83-231"/>
</dbReference>
<dbReference type="PDB" id="6U0X">
    <property type="method" value="X-ray"/>
    <property type="resolution" value="1.86 A"/>
    <property type="chains" value="A=83-231"/>
</dbReference>
<dbReference type="PDB" id="6XSB">
    <property type="method" value="X-ray"/>
    <property type="resolution" value="1.95 A"/>
    <property type="chains" value="A=83-231"/>
</dbReference>
<dbReference type="PDB" id="6XSC">
    <property type="method" value="X-ray"/>
    <property type="resolution" value="2.00 A"/>
    <property type="chains" value="A=83-231"/>
</dbReference>
<dbReference type="PDB" id="6XSE">
    <property type="method" value="X-ray"/>
    <property type="resolution" value="2.10 A"/>
    <property type="chains" value="A=83-231"/>
</dbReference>
<dbReference type="PDB" id="6XSF">
    <property type="method" value="X-ray"/>
    <property type="resolution" value="1.60 A"/>
    <property type="chains" value="A=83-231"/>
</dbReference>
<dbReference type="PDB" id="6XSG">
    <property type="method" value="X-ray"/>
    <property type="resolution" value="2.00 A"/>
    <property type="chains" value="A=83-231"/>
</dbReference>
<dbReference type="PDB" id="6XSH">
    <property type="method" value="X-ray"/>
    <property type="resolution" value="2.00 A"/>
    <property type="chains" value="A=83-231"/>
</dbReference>
<dbReference type="PDB" id="6XSI">
    <property type="method" value="X-ray"/>
    <property type="resolution" value="2.00 A"/>
    <property type="chains" value="A=83-231"/>
</dbReference>
<dbReference type="PDB" id="8K2R">
    <property type="method" value="NMR"/>
    <property type="chains" value="B=152-222"/>
</dbReference>
<dbReference type="PDB" id="8K2T">
    <property type="method" value="NMR"/>
    <property type="chains" value="C=95-222"/>
</dbReference>
<dbReference type="PDB" id="9C11">
    <property type="method" value="X-ray"/>
    <property type="resolution" value="1.95 A"/>
    <property type="chains" value="A/B=83-231"/>
</dbReference>
<dbReference type="PDBsum" id="1A2T"/>
<dbReference type="PDBsum" id="1A2U"/>
<dbReference type="PDBsum" id="1A3T"/>
<dbReference type="PDBsum" id="1A3U"/>
<dbReference type="PDBsum" id="1A3V"/>
<dbReference type="PDBsum" id="1AEX"/>
<dbReference type="PDBsum" id="1ENA"/>
<dbReference type="PDBsum" id="1ENC"/>
<dbReference type="PDBsum" id="1EQV"/>
<dbReference type="PDBsum" id="1EY0"/>
<dbReference type="PDBsum" id="1EY4"/>
<dbReference type="PDBsum" id="1EY5"/>
<dbReference type="PDBsum" id="1EY6"/>
<dbReference type="PDBsum" id="1EY7"/>
<dbReference type="PDBsum" id="1EY8"/>
<dbReference type="PDBsum" id="1EY9"/>
<dbReference type="PDBsum" id="1EYA"/>
<dbReference type="PDBsum" id="1EYC"/>
<dbReference type="PDBsum" id="1EYD"/>
<dbReference type="PDBsum" id="1EZ6"/>
<dbReference type="PDBsum" id="1EZ8"/>
<dbReference type="PDBsum" id="1F2M"/>
<dbReference type="PDBsum" id="1F2Y"/>
<dbReference type="PDBsum" id="1F2Z"/>
<dbReference type="PDBsum" id="1IHZ"/>
<dbReference type="PDBsum" id="1II3"/>
<dbReference type="PDBsum" id="1JOK"/>
<dbReference type="PDBsum" id="1JOO"/>
<dbReference type="PDBsum" id="1JOQ"/>
<dbReference type="PDBsum" id="1JOR"/>
<dbReference type="PDBsum" id="1KAA"/>
<dbReference type="PDBsum" id="1KAB"/>
<dbReference type="PDBsum" id="1KDA"/>
<dbReference type="PDBsum" id="1KDB"/>
<dbReference type="PDBsum" id="1KDC"/>
<dbReference type="PDBsum" id="1NSN"/>
<dbReference type="PDBsum" id="1NUC"/>
<dbReference type="PDBsum" id="1RKN"/>
<dbReference type="PDBsum" id="1SNC"/>
<dbReference type="PDBsum" id="1SND"/>
<dbReference type="PDBsum" id="1SNM"/>
<dbReference type="PDBsum" id="1SNO"/>
<dbReference type="PDBsum" id="1SNP"/>
<dbReference type="PDBsum" id="1SNQ"/>
<dbReference type="PDBsum" id="1STA"/>
<dbReference type="PDBsum" id="1STB"/>
<dbReference type="PDBsum" id="1STG"/>
<dbReference type="PDBsum" id="1STH"/>
<dbReference type="PDBsum" id="1STN"/>
<dbReference type="PDBsum" id="1STY"/>
<dbReference type="PDBsum" id="1SYB"/>
<dbReference type="PDBsum" id="1SYC"/>
<dbReference type="PDBsum" id="1SYD"/>
<dbReference type="PDBsum" id="1SYE"/>
<dbReference type="PDBsum" id="1SYF"/>
<dbReference type="PDBsum" id="1SYG"/>
<dbReference type="PDBsum" id="1TQO"/>
<dbReference type="PDBsum" id="1TR5"/>
<dbReference type="PDBsum" id="1TT2"/>
<dbReference type="PDBsum" id="1U9R"/>
<dbReference type="PDBsum" id="2ENB"/>
<dbReference type="PDBsum" id="2EXZ"/>
<dbReference type="PDBsum" id="2EY1"/>
<dbReference type="PDBsum" id="2EY2"/>
<dbReference type="PDBsum" id="2EY5"/>
<dbReference type="PDBsum" id="2EY6"/>
<dbReference type="PDBsum" id="2EYF"/>
<dbReference type="PDBsum" id="2EYH"/>
<dbReference type="PDBsum" id="2EYJ"/>
<dbReference type="PDBsum" id="2EYL"/>
<dbReference type="PDBsum" id="2EYM"/>
<dbReference type="PDBsum" id="2EYO"/>
<dbReference type="PDBsum" id="2EYP"/>
<dbReference type="PDBsum" id="2F0D"/>
<dbReference type="PDBsum" id="2F0E"/>
<dbReference type="PDBsum" id="2F0F"/>
<dbReference type="PDBsum" id="2F0G"/>
<dbReference type="PDBsum" id="2F0H"/>
<dbReference type="PDBsum" id="2F0I"/>
<dbReference type="PDBsum" id="2F0J"/>
<dbReference type="PDBsum" id="2F0K"/>
<dbReference type="PDBsum" id="2F0L"/>
<dbReference type="PDBsum" id="2F0M"/>
<dbReference type="PDBsum" id="2F0N"/>
<dbReference type="PDBsum" id="2F0O"/>
<dbReference type="PDBsum" id="2F0P"/>
<dbReference type="PDBsum" id="2F0Q"/>
<dbReference type="PDBsum" id="2F0S"/>
<dbReference type="PDBsum" id="2F0T"/>
<dbReference type="PDBsum" id="2F0U"/>
<dbReference type="PDBsum" id="2F0V"/>
<dbReference type="PDBsum" id="2F0W"/>
<dbReference type="PDBsum" id="2F3V"/>
<dbReference type="PDBsum" id="2F3W"/>
<dbReference type="PDBsum" id="2FXY"/>
<dbReference type="PDBsum" id="2FXZ"/>
<dbReference type="PDBsum" id="2GSI"/>
<dbReference type="PDBsum" id="2KHS"/>
<dbReference type="PDBsum" id="2NUC"/>
<dbReference type="PDBsum" id="2OEO"/>
<dbReference type="PDBsum" id="2OF1"/>
<dbReference type="PDBsum" id="2PQE"/>
<dbReference type="PDBsum" id="2QDB"/>
<dbReference type="PDBsum" id="2RBM"/>
<dbReference type="PDBsum" id="2RDF"/>
<dbReference type="PDBsum" id="2RKS"/>
<dbReference type="PDBsum" id="2SNM"/>
<dbReference type="PDBsum" id="2SNS"/>
<dbReference type="PDBsum" id="2SOB"/>
<dbReference type="PDBsum" id="3BDC"/>
<dbReference type="PDBsum" id="3C1E"/>
<dbReference type="PDBsum" id="3C1F"/>
<dbReference type="PDBsum" id="3D4D"/>
<dbReference type="PDBsum" id="3D6C"/>
<dbReference type="PDBsum" id="3DHQ"/>
<dbReference type="PDBsum" id="3DMU"/>
<dbReference type="PDBsum" id="3E5S"/>
<dbReference type="PDBsum" id="3EJI"/>
<dbReference type="PDBsum" id="3ERO"/>
<dbReference type="PDBsum" id="3ERQ"/>
<dbReference type="PDBsum" id="3EVQ"/>
<dbReference type="PDBsum" id="3H6M"/>
<dbReference type="PDBsum" id="3HEJ"/>
<dbReference type="PDBsum" id="3HZX"/>
<dbReference type="PDBsum" id="3ITP"/>
<dbReference type="PDBsum" id="3LX0"/>
<dbReference type="PDBsum" id="3MEH"/>
<dbReference type="PDBsum" id="3MHB"/>
<dbReference type="PDBsum" id="3MXP"/>
<dbReference type="PDBsum" id="3MZ5"/>
<dbReference type="PDBsum" id="3NHH"/>
<dbReference type="PDBsum" id="3NK9"/>
<dbReference type="PDBsum" id="3NP8"/>
<dbReference type="PDBsum" id="3NQT"/>
<dbReference type="PDBsum" id="3NUC"/>
<dbReference type="PDBsum" id="3NXW"/>
<dbReference type="PDBsum" id="3OSO"/>
<dbReference type="PDBsum" id="3OWF"/>
<dbReference type="PDBsum" id="3P1H"/>
<dbReference type="PDBsum" id="3P75"/>
<dbReference type="PDBsum" id="3PMF"/>
<dbReference type="PDBsum" id="3QB3"/>
<dbReference type="PDBsum" id="3RUZ"/>
<dbReference type="PDBsum" id="3S9W"/>
<dbReference type="PDBsum" id="3SHL"/>
<dbReference type="PDBsum" id="3SK4"/>
<dbReference type="PDBsum" id="3SK5"/>
<dbReference type="PDBsum" id="3SK6"/>
<dbReference type="PDBsum" id="3SK8"/>
<dbReference type="PDBsum" id="3SR1"/>
<dbReference type="PDBsum" id="3SXH"/>
<dbReference type="PDBsum" id="3T13"/>
<dbReference type="PDBsum" id="3T16"/>
<dbReference type="PDBsum" id="3TME"/>
<dbReference type="PDBsum" id="3TP5"/>
<dbReference type="PDBsum" id="3TP6"/>
<dbReference type="PDBsum" id="3TP7"/>
<dbReference type="PDBsum" id="3TP8"/>
<dbReference type="PDBsum" id="3U9O"/>
<dbReference type="PDBsum" id="3V2T"/>
<dbReference type="PDBsum" id="3VA5"/>
<dbReference type="PDBsum" id="4DF7"/>
<dbReference type="PDBsum" id="4DFA"/>
<dbReference type="PDBsum" id="4DGZ"/>
<dbReference type="PDBsum" id="4DU9"/>
<dbReference type="PDBsum" id="4E6I"/>
<dbReference type="PDBsum" id="4EQN"/>
<dbReference type="PDBsum" id="4EQO"/>
<dbReference type="PDBsum" id="4EQP"/>
<dbReference type="PDBsum" id="4EVO"/>
<dbReference type="PDBsum" id="4F7X"/>
<dbReference type="PDBsum" id="4F8M"/>
<dbReference type="PDBsum" id="4G57"/>
<dbReference type="PDBsum" id="4H7B"/>
<dbReference type="PDBsum" id="4HMI"/>
<dbReference type="PDBsum" id="4HMJ"/>
<dbReference type="PDBsum" id="4HTH"/>
<dbReference type="PDBsum" id="4I65"/>
<dbReference type="PDBsum" id="4IAL"/>
<dbReference type="PDBsum" id="4ID6"/>
<dbReference type="PDBsum" id="4IUN"/>
<dbReference type="PDBsum" id="4IZ8"/>
<dbReference type="PDBsum" id="4J1M"/>
<dbReference type="PDBsum" id="4J6H"/>
<dbReference type="PDBsum" id="4K14"/>
<dbReference type="PDBsum" id="4K2K"/>
<dbReference type="PDBsum" id="4K2L"/>
<dbReference type="PDBsum" id="4K5V"/>
<dbReference type="PDBsum" id="4K5W"/>
<dbReference type="PDBsum" id="4K5X"/>
<dbReference type="PDBsum" id="4K6D"/>
<dbReference type="PDBsum" id="4K8I"/>
<dbReference type="PDBsum" id="4K8J"/>
<dbReference type="PDBsum" id="4KD3"/>
<dbReference type="PDBsum" id="4KD4"/>
<dbReference type="PDBsum" id="4KHV"/>
<dbReference type="PDBsum" id="4KJN"/>
<dbReference type="PDBsum" id="4KJO"/>
<dbReference type="PDBsum" id="4KTA"/>
<dbReference type="PDBsum" id="4KV6"/>
<dbReference type="PDBsum" id="4KY5"/>
<dbReference type="PDBsum" id="4KY6"/>
<dbReference type="PDBsum" id="4KY7"/>
<dbReference type="PDBsum" id="4LAA"/>
<dbReference type="PDBsum" id="4ME5"/>
<dbReference type="PDBsum" id="4MIU"/>
<dbReference type="PDBsum" id="4N9P"/>
<dbReference type="PDBsum" id="4N9T"/>
<dbReference type="PDBsum" id="4NDX"/>
<dbReference type="PDBsum" id="4NKL"/>
<dbReference type="PDBsum" id="4NMZ"/>
<dbReference type="PDBsum" id="4NP5"/>
<dbReference type="PDBsum" id="4ODG"/>
<dbReference type="PDBsum" id="4OL7"/>
<dbReference type="PDBsum" id="4PMB"/>
<dbReference type="PDBsum" id="4PMC"/>
<dbReference type="PDBsum" id="4PNY"/>
<dbReference type="PDBsum" id="4QB4"/>
<dbReference type="PDBsum" id="4QF4"/>
<dbReference type="PDBsum" id="4R8N"/>
<dbReference type="PDBsum" id="4RKB"/>
<dbReference type="PDBsum" id="4RKL"/>
<dbReference type="PDBsum" id="4S3S"/>
<dbReference type="PDBsum" id="4TRD"/>
<dbReference type="PDBsum" id="4WOR"/>
<dbReference type="PDBsum" id="4YIJ"/>
<dbReference type="PDBsum" id="4ZQ3"/>
<dbReference type="PDBsum" id="4ZUI"/>
<dbReference type="PDBsum" id="4ZUJ"/>
<dbReference type="PDBsum" id="5C3W"/>
<dbReference type="PDBsum" id="5C3X"/>
<dbReference type="PDBsum" id="5C4H"/>
<dbReference type="PDBsum" id="5C4Z"/>
<dbReference type="PDBsum" id="5C5L"/>
<dbReference type="PDBsum" id="5C5M"/>
<dbReference type="PDBsum" id="5C6A"/>
<dbReference type="PDBsum" id="5CC4"/>
<dbReference type="PDBsum" id="5CGK"/>
<dbReference type="PDBsum" id="5CR3"/>
<dbReference type="PDBsum" id="5CV4"/>
<dbReference type="PDBsum" id="5CV5"/>
<dbReference type="PDBsum" id="5CV6"/>
<dbReference type="PDBsum" id="5CV7"/>
<dbReference type="PDBsum" id="5CV8"/>
<dbReference type="PDBsum" id="5CV9"/>
<dbReference type="PDBsum" id="5DEH"/>
<dbReference type="PDBsum" id="5E1F"/>
<dbReference type="PDBsum" id="5E3F"/>
<dbReference type="PDBsum" id="5EGT"/>
<dbReference type="PDBsum" id="5EKK"/>
<dbReference type="PDBsum" id="5EKL"/>
<dbReference type="PDBsum" id="5F2D"/>
<dbReference type="PDBsum" id="5HGT"/>
<dbReference type="PDBsum" id="5HUR"/>
<dbReference type="PDBsum" id="5I6W"/>
<dbReference type="PDBsum" id="5I6Y"/>
<dbReference type="PDBsum" id="5I9O"/>
<dbReference type="PDBsum" id="5I9P"/>
<dbReference type="PDBsum" id="5IGB"/>
<dbReference type="PDBsum" id="5IGC"/>
<dbReference type="PDBsum" id="5IGD"/>
<dbReference type="PDBsum" id="5IGE"/>
<dbReference type="PDBsum" id="5IGF"/>
<dbReference type="PDBsum" id="5IGG"/>
<dbReference type="PDBsum" id="5IIF"/>
<dbReference type="PDBsum" id="5IOC"/>
<dbReference type="PDBsum" id="5IOD"/>
<dbReference type="PDBsum" id="5ISR"/>
<dbReference type="PDBsum" id="5J1Z"/>
<dbReference type="PDBsum" id="5J22"/>
<dbReference type="PDBsum" id="5JAV"/>
<dbReference type="PDBsum" id="5JOB"/>
<dbReference type="PDBsum" id="5K5P"/>
<dbReference type="PDBsum" id="5KEE"/>
<dbReference type="PDBsum" id="5KGU"/>
<dbReference type="PDBsum" id="5KIX"/>
<dbReference type="PDBsum" id="5KRU"/>
<dbReference type="PDBsum" id="5KYI"/>
<dbReference type="PDBsum" id="5KYL"/>
<dbReference type="PDBsum" id="5NUC"/>
<dbReference type="PDBsum" id="6AMF"/>
<dbReference type="PDBsum" id="6B8R"/>
<dbReference type="PDBsum" id="6EEG"/>
<dbReference type="PDBsum" id="6EEK"/>
<dbReference type="PDBsum" id="6OK8"/>
<dbReference type="PDBsum" id="6U0W"/>
<dbReference type="PDBsum" id="6U0X"/>
<dbReference type="PDBsum" id="6XSB"/>
<dbReference type="PDBsum" id="6XSC"/>
<dbReference type="PDBsum" id="6XSE"/>
<dbReference type="PDBsum" id="6XSF"/>
<dbReference type="PDBsum" id="6XSG"/>
<dbReference type="PDBsum" id="6XSH"/>
<dbReference type="PDBsum" id="6XSI"/>
<dbReference type="PDBsum" id="8K2R"/>
<dbReference type="PDBsum" id="8K2T"/>
<dbReference type="PDBsum" id="9C11"/>
<dbReference type="BMRB" id="P00644"/>
<dbReference type="SMR" id="P00644"/>
<dbReference type="DrugBank" id="DB03654">
    <property type="generic name" value="S,S-Propylthiocysteine"/>
</dbReference>
<dbReference type="DrugBank" id="DB04205">
    <property type="generic name" value="Thymidine-3',5'-Diphosphate"/>
</dbReference>
<dbReference type="ABCD" id="P00644">
    <property type="antibodies" value="2 sequenced antibodies"/>
</dbReference>
<dbReference type="BRENDA" id="3.1.31.1">
    <property type="organism ID" value="3352"/>
</dbReference>
<dbReference type="EvolutionaryTrace" id="P00644"/>
<dbReference type="GO" id="GO:0005576">
    <property type="term" value="C:extracellular region"/>
    <property type="evidence" value="ECO:0007669"/>
    <property type="project" value="UniProtKB-SubCell"/>
</dbReference>
<dbReference type="GO" id="GO:0016020">
    <property type="term" value="C:membrane"/>
    <property type="evidence" value="ECO:0007669"/>
    <property type="project" value="UniProtKB-SubCell"/>
</dbReference>
<dbReference type="GO" id="GO:0016894">
    <property type="term" value="F:endonuclease activity, active with either ribo- or deoxyribonucleic acids and producing 3'-phosphomonoesters"/>
    <property type="evidence" value="ECO:0007669"/>
    <property type="project" value="UniProtKB-EC"/>
</dbReference>
<dbReference type="GO" id="GO:0046872">
    <property type="term" value="F:metal ion binding"/>
    <property type="evidence" value="ECO:0007669"/>
    <property type="project" value="UniProtKB-KW"/>
</dbReference>
<dbReference type="GO" id="GO:0003676">
    <property type="term" value="F:nucleic acid binding"/>
    <property type="evidence" value="ECO:0007669"/>
    <property type="project" value="InterPro"/>
</dbReference>
<dbReference type="CDD" id="cd00175">
    <property type="entry name" value="SNc"/>
    <property type="match status" value="1"/>
</dbReference>
<dbReference type="FunFam" id="2.40.50.90:FF:000025">
    <property type="entry name" value="Thermonuclease"/>
    <property type="match status" value="1"/>
</dbReference>
<dbReference type="Gene3D" id="2.40.50.90">
    <property type="match status" value="1"/>
</dbReference>
<dbReference type="InterPro" id="IPR035437">
    <property type="entry name" value="SNase_OB-fold_sf"/>
</dbReference>
<dbReference type="InterPro" id="IPR016071">
    <property type="entry name" value="Staphylococal_nuclease_OB-fold"/>
</dbReference>
<dbReference type="InterPro" id="IPR002071">
    <property type="entry name" value="Thermonucl_AS"/>
</dbReference>
<dbReference type="PANTHER" id="PTHR12302">
    <property type="entry name" value="EBNA2 BINDING PROTEIN P100"/>
    <property type="match status" value="1"/>
</dbReference>
<dbReference type="PANTHER" id="PTHR12302:SF3">
    <property type="entry name" value="SERINE_THREONINE-PROTEIN KINASE 31"/>
    <property type="match status" value="1"/>
</dbReference>
<dbReference type="Pfam" id="PF00565">
    <property type="entry name" value="SNase"/>
    <property type="match status" value="1"/>
</dbReference>
<dbReference type="SMART" id="SM00318">
    <property type="entry name" value="SNc"/>
    <property type="match status" value="1"/>
</dbReference>
<dbReference type="SUPFAM" id="SSF50199">
    <property type="entry name" value="Staphylococcal nuclease"/>
    <property type="match status" value="1"/>
</dbReference>
<dbReference type="PROSITE" id="PS01123">
    <property type="entry name" value="TNASE_1"/>
    <property type="match status" value="1"/>
</dbReference>
<dbReference type="PROSITE" id="PS01284">
    <property type="entry name" value="TNASE_2"/>
    <property type="match status" value="1"/>
</dbReference>
<dbReference type="PROSITE" id="PS50830">
    <property type="entry name" value="TNASE_3"/>
    <property type="match status" value="1"/>
</dbReference>
<accession>P00644</accession>
<accession>P13718</accession>
<accession>Q53711</accession>
<organism>
    <name type="scientific">Staphylococcus aureus</name>
    <dbReference type="NCBI Taxonomy" id="1280"/>
    <lineage>
        <taxon>Bacteria</taxon>
        <taxon>Bacillati</taxon>
        <taxon>Bacillota</taxon>
        <taxon>Bacilli</taxon>
        <taxon>Bacillales</taxon>
        <taxon>Staphylococcaceae</taxon>
        <taxon>Staphylococcus</taxon>
    </lineage>
</organism>
<feature type="signal peptide" evidence="1">
    <location>
        <begin position="1"/>
        <end position="26"/>
    </location>
</feature>
<feature type="propeptide" id="PRO_0000045226" evidence="8">
    <location>
        <begin position="27"/>
        <end position="63"/>
    </location>
</feature>
<feature type="chain" id="PRO_0000034389" description="Nuclease B">
    <location>
        <begin position="64"/>
        <end position="231"/>
    </location>
</feature>
<feature type="propeptide" id="PRO_0000034390" evidence="7">
    <location>
        <begin position="64"/>
        <end position="82"/>
    </location>
</feature>
<feature type="chain" id="PRO_0000034391" description="Nuclease A">
    <location>
        <begin position="83"/>
        <end position="231"/>
    </location>
</feature>
<feature type="region of interest" description="Disordered" evidence="5">
    <location>
        <begin position="61"/>
        <end position="86"/>
    </location>
</feature>
<feature type="region of interest" description="Disordered" evidence="5">
    <location>
        <begin position="203"/>
        <end position="231"/>
    </location>
</feature>
<feature type="compositionally biased region" description="Polar residues" evidence="5">
    <location>
        <begin position="61"/>
        <end position="73"/>
    </location>
</feature>
<feature type="compositionally biased region" description="Basic and acidic residues" evidence="5">
    <location>
        <begin position="203"/>
        <end position="219"/>
    </location>
</feature>
<feature type="active site" evidence="6">
    <location>
        <position position="117"/>
    </location>
</feature>
<feature type="active site" evidence="6">
    <location>
        <position position="125"/>
    </location>
</feature>
<feature type="active site" evidence="6">
    <location>
        <position position="169"/>
    </location>
</feature>
<feature type="binding site">
    <location>
        <position position="103"/>
    </location>
    <ligand>
        <name>Ca(2+)</name>
        <dbReference type="ChEBI" id="CHEBI:29108"/>
    </ligand>
</feature>
<feature type="binding site">
    <location>
        <position position="122"/>
    </location>
    <ligand>
        <name>Ca(2+)</name>
        <dbReference type="ChEBI" id="CHEBI:29108"/>
    </ligand>
</feature>
<feature type="binding site">
    <location>
        <position position="123"/>
    </location>
    <ligand>
        <name>Ca(2+)</name>
        <dbReference type="ChEBI" id="CHEBI:29108"/>
    </ligand>
</feature>
<feature type="sequence conflict" description="In Ref. 3; AAA26659." evidence="12" ref="3">
    <original>V</original>
    <variation>M</variation>
    <location>
        <position position="30"/>
    </location>
</feature>
<feature type="turn" evidence="17">
    <location>
        <begin position="84"/>
        <end position="86"/>
    </location>
</feature>
<feature type="strand" evidence="19">
    <location>
        <begin position="91"/>
        <end position="99"/>
    </location>
</feature>
<feature type="strand" evidence="19">
    <location>
        <begin position="101"/>
        <end position="109"/>
    </location>
</feature>
<feature type="strand" evidence="19">
    <location>
        <begin position="112"/>
        <end position="118"/>
    </location>
</feature>
<feature type="strand" evidence="20">
    <location>
        <begin position="126"/>
        <end position="128"/>
    </location>
</feature>
<feature type="strand" evidence="17">
    <location>
        <begin position="129"/>
        <end position="131"/>
    </location>
</feature>
<feature type="strand" evidence="15">
    <location>
        <begin position="134"/>
        <end position="136"/>
    </location>
</feature>
<feature type="helix" evidence="19">
    <location>
        <begin position="137"/>
        <end position="150"/>
    </location>
</feature>
<feature type="strand" evidence="19">
    <location>
        <begin position="154"/>
        <end position="157"/>
    </location>
</feature>
<feature type="strand" evidence="16">
    <location>
        <begin position="166"/>
        <end position="168"/>
    </location>
</feature>
<feature type="strand" evidence="19">
    <location>
        <begin position="170"/>
        <end position="176"/>
    </location>
</feature>
<feature type="strand" evidence="18">
    <location>
        <begin position="177"/>
        <end position="179"/>
    </location>
</feature>
<feature type="helix" evidence="19">
    <location>
        <begin position="181"/>
        <end position="187"/>
    </location>
</feature>
<feature type="strand" evidence="19">
    <location>
        <begin position="190"/>
        <end position="193"/>
    </location>
</feature>
<feature type="strand" evidence="17">
    <location>
        <begin position="198"/>
        <end position="200"/>
    </location>
</feature>
<feature type="turn" evidence="14">
    <location>
        <begin position="201"/>
        <end position="203"/>
    </location>
</feature>
<feature type="helix" evidence="19">
    <location>
        <begin position="204"/>
        <end position="216"/>
    </location>
</feature>
<feature type="helix" evidence="19">
    <location>
        <begin position="220"/>
        <end position="222"/>
    </location>
</feature>
<feature type="strand" evidence="15">
    <location>
        <begin position="227"/>
        <end position="229"/>
    </location>
</feature>
<gene>
    <name evidence="10" type="primary">nuc</name>
</gene>
<sequence length="231" mass="25471">MLVMTEYLLSAGICMAIVSILLIGMAISNVSKGQYAKRFFFFATSCLVLTLVVVSSLSSSANASQTDNGVNRSGSEDPTVYSATSTKKLHKEPATLIKAIDGDTVKLMYKGQPMTFRLLLVDTPETKHPKKGVEKYGPEASAFTKKMVENAKKIEVEFDKGQRTDKYGRGLAYIYADGKMVNEALVRQGLAKVAYVYKPNNTHEQHLRKSEAQAKKEKLNIWSEDNADSGQ</sequence>